<sequence length="208" mass="22533">MKIVEVKHPLVKHKLGLMRENDISTKRFRELASEVGSLLTYEATADLETEKVTIEGWNGPVEIDQIKGKKITVVPILRAGLGMMEGVLENVPSARISVVGMYRNEETLEPVPYFQKLVSNIDERMALIVDPMLATGGSVIATIDLLKKAGCSSIKVLVLVAAPEGIAALEKAHPDVELYTASIDQGLNEHGYIIPGLGDAGDKIFGTK</sequence>
<accession>B4TD73</accession>
<evidence type="ECO:0000255" key="1">
    <source>
        <dbReference type="HAMAP-Rule" id="MF_01218"/>
    </source>
</evidence>
<keyword id="KW-0021">Allosteric enzyme</keyword>
<keyword id="KW-0328">Glycosyltransferase</keyword>
<keyword id="KW-0342">GTP-binding</keyword>
<keyword id="KW-0460">Magnesium</keyword>
<keyword id="KW-0547">Nucleotide-binding</keyword>
<keyword id="KW-0808">Transferase</keyword>
<proteinExistence type="inferred from homology"/>
<name>UPP_SALHS</name>
<gene>
    <name evidence="1" type="primary">upp</name>
    <name type="ordered locus">SeHA_C2757</name>
</gene>
<organism>
    <name type="scientific">Salmonella heidelberg (strain SL476)</name>
    <dbReference type="NCBI Taxonomy" id="454169"/>
    <lineage>
        <taxon>Bacteria</taxon>
        <taxon>Pseudomonadati</taxon>
        <taxon>Pseudomonadota</taxon>
        <taxon>Gammaproteobacteria</taxon>
        <taxon>Enterobacterales</taxon>
        <taxon>Enterobacteriaceae</taxon>
        <taxon>Salmonella</taxon>
    </lineage>
</organism>
<feature type="chain" id="PRO_1000139158" description="Uracil phosphoribosyltransferase">
    <location>
        <begin position="1"/>
        <end position="208"/>
    </location>
</feature>
<feature type="binding site" evidence="1">
    <location>
        <position position="78"/>
    </location>
    <ligand>
        <name>5-phospho-alpha-D-ribose 1-diphosphate</name>
        <dbReference type="ChEBI" id="CHEBI:58017"/>
    </ligand>
</feature>
<feature type="binding site" evidence="1">
    <location>
        <position position="103"/>
    </location>
    <ligand>
        <name>5-phospho-alpha-D-ribose 1-diphosphate</name>
        <dbReference type="ChEBI" id="CHEBI:58017"/>
    </ligand>
</feature>
<feature type="binding site" evidence="1">
    <location>
        <begin position="130"/>
        <end position="138"/>
    </location>
    <ligand>
        <name>5-phospho-alpha-D-ribose 1-diphosphate</name>
        <dbReference type="ChEBI" id="CHEBI:58017"/>
    </ligand>
</feature>
<feature type="binding site" evidence="1">
    <location>
        <position position="193"/>
    </location>
    <ligand>
        <name>uracil</name>
        <dbReference type="ChEBI" id="CHEBI:17568"/>
    </ligand>
</feature>
<feature type="binding site" evidence="1">
    <location>
        <begin position="198"/>
        <end position="200"/>
    </location>
    <ligand>
        <name>uracil</name>
        <dbReference type="ChEBI" id="CHEBI:17568"/>
    </ligand>
</feature>
<feature type="binding site" evidence="1">
    <location>
        <position position="199"/>
    </location>
    <ligand>
        <name>5-phospho-alpha-D-ribose 1-diphosphate</name>
        <dbReference type="ChEBI" id="CHEBI:58017"/>
    </ligand>
</feature>
<reference key="1">
    <citation type="journal article" date="2011" name="J. Bacteriol.">
        <title>Comparative genomics of 28 Salmonella enterica isolates: evidence for CRISPR-mediated adaptive sublineage evolution.</title>
        <authorList>
            <person name="Fricke W.F."/>
            <person name="Mammel M.K."/>
            <person name="McDermott P.F."/>
            <person name="Tartera C."/>
            <person name="White D.G."/>
            <person name="Leclerc J.E."/>
            <person name="Ravel J."/>
            <person name="Cebula T.A."/>
        </authorList>
    </citation>
    <scope>NUCLEOTIDE SEQUENCE [LARGE SCALE GENOMIC DNA]</scope>
    <source>
        <strain>SL476</strain>
    </source>
</reference>
<dbReference type="EC" id="2.4.2.9" evidence="1"/>
<dbReference type="EMBL" id="CP001120">
    <property type="protein sequence ID" value="ACF69608.1"/>
    <property type="molecule type" value="Genomic_DNA"/>
</dbReference>
<dbReference type="RefSeq" id="WP_000706208.1">
    <property type="nucleotide sequence ID" value="NC_011083.1"/>
</dbReference>
<dbReference type="SMR" id="B4TD73"/>
<dbReference type="KEGG" id="seh:SeHA_C2757"/>
<dbReference type="HOGENOM" id="CLU_067096_2_2_6"/>
<dbReference type="UniPathway" id="UPA00574">
    <property type="reaction ID" value="UER00636"/>
</dbReference>
<dbReference type="Proteomes" id="UP000001866">
    <property type="component" value="Chromosome"/>
</dbReference>
<dbReference type="GO" id="GO:0005525">
    <property type="term" value="F:GTP binding"/>
    <property type="evidence" value="ECO:0007669"/>
    <property type="project" value="UniProtKB-KW"/>
</dbReference>
<dbReference type="GO" id="GO:0000287">
    <property type="term" value="F:magnesium ion binding"/>
    <property type="evidence" value="ECO:0007669"/>
    <property type="project" value="UniProtKB-UniRule"/>
</dbReference>
<dbReference type="GO" id="GO:0004845">
    <property type="term" value="F:uracil phosphoribosyltransferase activity"/>
    <property type="evidence" value="ECO:0007669"/>
    <property type="project" value="UniProtKB-UniRule"/>
</dbReference>
<dbReference type="GO" id="GO:0044206">
    <property type="term" value="P:UMP salvage"/>
    <property type="evidence" value="ECO:0007669"/>
    <property type="project" value="UniProtKB-UniRule"/>
</dbReference>
<dbReference type="GO" id="GO:0006223">
    <property type="term" value="P:uracil salvage"/>
    <property type="evidence" value="ECO:0007669"/>
    <property type="project" value="InterPro"/>
</dbReference>
<dbReference type="CDD" id="cd06223">
    <property type="entry name" value="PRTases_typeI"/>
    <property type="match status" value="1"/>
</dbReference>
<dbReference type="FunFam" id="3.40.50.2020:FF:000003">
    <property type="entry name" value="Uracil phosphoribosyltransferase"/>
    <property type="match status" value="1"/>
</dbReference>
<dbReference type="Gene3D" id="3.40.50.2020">
    <property type="match status" value="1"/>
</dbReference>
<dbReference type="HAMAP" id="MF_01218_B">
    <property type="entry name" value="Upp_B"/>
    <property type="match status" value="1"/>
</dbReference>
<dbReference type="InterPro" id="IPR000836">
    <property type="entry name" value="PRibTrfase_dom"/>
</dbReference>
<dbReference type="InterPro" id="IPR029057">
    <property type="entry name" value="PRTase-like"/>
</dbReference>
<dbReference type="InterPro" id="IPR034332">
    <property type="entry name" value="Upp_B"/>
</dbReference>
<dbReference type="InterPro" id="IPR050054">
    <property type="entry name" value="UPRTase/APRTase"/>
</dbReference>
<dbReference type="InterPro" id="IPR005765">
    <property type="entry name" value="Ura_phspho_trans"/>
</dbReference>
<dbReference type="NCBIfam" id="NF001097">
    <property type="entry name" value="PRK00129.1"/>
    <property type="match status" value="1"/>
</dbReference>
<dbReference type="NCBIfam" id="TIGR01091">
    <property type="entry name" value="upp"/>
    <property type="match status" value="1"/>
</dbReference>
<dbReference type="PANTHER" id="PTHR32315">
    <property type="entry name" value="ADENINE PHOSPHORIBOSYLTRANSFERASE"/>
    <property type="match status" value="1"/>
</dbReference>
<dbReference type="PANTHER" id="PTHR32315:SF4">
    <property type="entry name" value="URACIL PHOSPHORIBOSYLTRANSFERASE, CHLOROPLASTIC"/>
    <property type="match status" value="1"/>
</dbReference>
<dbReference type="Pfam" id="PF14681">
    <property type="entry name" value="UPRTase"/>
    <property type="match status" value="1"/>
</dbReference>
<dbReference type="SUPFAM" id="SSF53271">
    <property type="entry name" value="PRTase-like"/>
    <property type="match status" value="1"/>
</dbReference>
<protein>
    <recommendedName>
        <fullName evidence="1">Uracil phosphoribosyltransferase</fullName>
        <ecNumber evidence="1">2.4.2.9</ecNumber>
    </recommendedName>
    <alternativeName>
        <fullName evidence="1">UMP pyrophosphorylase</fullName>
    </alternativeName>
    <alternativeName>
        <fullName evidence="1">UPRTase</fullName>
    </alternativeName>
</protein>
<comment type="function">
    <text evidence="1">Catalyzes the conversion of uracil and 5-phospho-alpha-D-ribose 1-diphosphate (PRPP) to UMP and diphosphate.</text>
</comment>
<comment type="catalytic activity">
    <reaction evidence="1">
        <text>UMP + diphosphate = 5-phospho-alpha-D-ribose 1-diphosphate + uracil</text>
        <dbReference type="Rhea" id="RHEA:13017"/>
        <dbReference type="ChEBI" id="CHEBI:17568"/>
        <dbReference type="ChEBI" id="CHEBI:33019"/>
        <dbReference type="ChEBI" id="CHEBI:57865"/>
        <dbReference type="ChEBI" id="CHEBI:58017"/>
        <dbReference type="EC" id="2.4.2.9"/>
    </reaction>
</comment>
<comment type="cofactor">
    <cofactor evidence="1">
        <name>Mg(2+)</name>
        <dbReference type="ChEBI" id="CHEBI:18420"/>
    </cofactor>
    <text evidence="1">Binds 1 Mg(2+) ion per subunit. The magnesium is bound as Mg-PRPP.</text>
</comment>
<comment type="activity regulation">
    <text evidence="1">Allosterically activated by GTP.</text>
</comment>
<comment type="pathway">
    <text evidence="1">Pyrimidine metabolism; UMP biosynthesis via salvage pathway; UMP from uracil: step 1/1.</text>
</comment>
<comment type="similarity">
    <text evidence="1">Belongs to the UPRTase family.</text>
</comment>